<gene>
    <name type="primary">gbuB</name>
    <name type="ordered locus">LMRG_02115</name>
</gene>
<organism>
    <name type="scientific">Listeria monocytogenes serotype 1/2a (strain 10403S)</name>
    <dbReference type="NCBI Taxonomy" id="393133"/>
    <lineage>
        <taxon>Bacteria</taxon>
        <taxon>Bacillati</taxon>
        <taxon>Bacillota</taxon>
        <taxon>Bacilli</taxon>
        <taxon>Bacillales</taxon>
        <taxon>Listeriaceae</taxon>
        <taxon>Listeria</taxon>
    </lineage>
</organism>
<sequence length="282" mass="30919">MPNIPTIPLASWIDKLVDGLTQFEGFFNVITNIIGGIVDAFQWVFDLVPPWLFIILLVFGTFWVNRKGKKWGLIIFEVVGLLLIWNLDFWRDMTQTLTLVLTSSLIALVIGVPLGIWMAKSNIVESIFKPVLDFMQTMPAFVYLIPAVAFFGIGMVPGVVASVIFAMPPTVRMTNLGIRQVSTELVEAADSFGSTPWQKLWKVQLPMAKSTMMAGINQSIMLALSMVVIASMIGAMGLGTRVYFAVGRNDAGGGFVAGIAIVIVAIILDRLTQAFNKKAKSE</sequence>
<reference key="1">
    <citation type="journal article" date="1999" name="Appl. Environ. Microbiol.">
        <title>Identification of an ATP-driven, osmoregulated glycine betaine transport system in Listeria monocytogenes.</title>
        <authorList>
            <person name="Ko R."/>
            <person name="Smith L.T."/>
        </authorList>
    </citation>
    <scope>NUCLEOTIDE SEQUENCE [GENOMIC DNA]</scope>
    <scope>FUNCTION</scope>
    <scope>SUBUNIT</scope>
    <source>
        <strain>10403S</strain>
    </source>
</reference>
<reference key="2">
    <citation type="submission" date="2010-04" db="EMBL/GenBank/DDBJ databases">
        <title>The genome sequence of Listeria monocytogenes strain 10403S.</title>
        <authorList>
            <consortium name="The Broad Institute Genome Sequencing Platform"/>
            <consortium name="The Broad Institute Genome Sequencing Center for Infectious Disease"/>
            <person name="Borowsky M."/>
            <person name="Borodovsky M."/>
            <person name="Young S.K."/>
            <person name="Zeng Q."/>
            <person name="Koehrsen M."/>
            <person name="Fitzgerald M."/>
            <person name="Wiedmann M."/>
            <person name="Swaminathan B."/>
            <person name="Lauer P."/>
            <person name="Portnoy D."/>
            <person name="Cossart P."/>
            <person name="Buchrieser C."/>
            <person name="Higgins D."/>
            <person name="Abouelleil A."/>
            <person name="Alvarado L."/>
            <person name="Arachchi H.M."/>
            <person name="Berlin A."/>
            <person name="Borenstein D."/>
            <person name="Brown A."/>
            <person name="Chapman S.B."/>
            <person name="Chen Z."/>
            <person name="Dunbar C.D."/>
            <person name="Engels R."/>
            <person name="Freedman E."/>
            <person name="Gearin G."/>
            <person name="Gellesch M."/>
            <person name="Goldberg J."/>
            <person name="Griggs A."/>
            <person name="Gujja S."/>
            <person name="Heilman E."/>
            <person name="Heiman D."/>
            <person name="Howarth C."/>
            <person name="Jen D."/>
            <person name="Larson L."/>
            <person name="Lui A."/>
            <person name="MacDonald J."/>
            <person name="Mehta T."/>
            <person name="Montmayeur A."/>
            <person name="Neiman D."/>
            <person name="Park D."/>
            <person name="Pearson M."/>
            <person name="Priest M."/>
            <person name="Richards J."/>
            <person name="Roberts A."/>
            <person name="Saif S."/>
            <person name="Shea T."/>
            <person name="Shenoy N."/>
            <person name="Sisk P."/>
            <person name="Stolte C."/>
            <person name="Sykes S."/>
            <person name="Walk T."/>
            <person name="White J."/>
            <person name="Yandava C."/>
            <person name="Haas B."/>
            <person name="Nusbaum C."/>
            <person name="Birren B."/>
        </authorList>
    </citation>
    <scope>NUCLEOTIDE SEQUENCE [LARGE SCALE GENOMIC DNA]</scope>
    <source>
        <strain>10403S</strain>
    </source>
</reference>
<reference key="3">
    <citation type="journal article" date="2000" name="J. Bacteriol.">
        <title>Osmotic and chill activation of glycine betaine porter II in Listeria monocytogenes membrane vesicles.</title>
        <authorList>
            <person name="Gerhardt P.N."/>
            <person name="Tombras Smith L."/>
            <person name="Smith G.M."/>
        </authorList>
    </citation>
    <scope>FUNCTION</scope>
    <scope>ACTIVITY REGULATION</scope>
    <scope>BIOPHYSICOCHEMICAL PROPERTIES</scope>
</reference>
<reference key="4">
    <citation type="journal article" date="2002" name="Appl. Environ. Microbiol.">
        <title>Gbu glycine betaine porter and carnitine uptake in osmotically stressed Listeria monocytogenes cells.</title>
        <authorList>
            <person name="Mendum M.L."/>
            <person name="Smith L.T."/>
        </authorList>
    </citation>
    <scope>FUNCTION IN CARNITINE UPTAKE</scope>
    <source>
        <strain>10403S</strain>
    </source>
</reference>
<reference key="5">
    <citation type="journal article" date="2003" name="Appl. Environ. Microbiol.">
        <title>Three transporters mediate uptake of glycine betaine and carnitine by Listeria monocytogenes in response to hyperosmotic stress.</title>
        <authorList>
            <person name="Angelidis A.S."/>
            <person name="Smith G.M."/>
        </authorList>
    </citation>
    <scope>FUNCTION IN GLYCINE BETAINE AND CARNITINE UPTAKE</scope>
    <source>
        <strain>10403S</strain>
    </source>
</reference>
<feature type="chain" id="PRO_0000417959" description="Glycine betaine/carnitine transport permease protein GbuB">
    <location>
        <begin position="1"/>
        <end position="282"/>
    </location>
</feature>
<feature type="transmembrane region" description="Helical" evidence="1">
    <location>
        <begin position="44"/>
        <end position="64"/>
    </location>
</feature>
<feature type="transmembrane region" description="Helical" evidence="1">
    <location>
        <begin position="70"/>
        <end position="90"/>
    </location>
</feature>
<feature type="transmembrane region" description="Helical" evidence="1">
    <location>
        <begin position="99"/>
        <end position="119"/>
    </location>
</feature>
<feature type="transmembrane region" description="Helical" evidence="1">
    <location>
        <begin position="140"/>
        <end position="160"/>
    </location>
</feature>
<feature type="transmembrane region" description="Helical" evidence="1">
    <location>
        <begin position="220"/>
        <end position="240"/>
    </location>
</feature>
<feature type="transmembrane region" description="Helical" evidence="1">
    <location>
        <begin position="251"/>
        <end position="271"/>
    </location>
</feature>
<feature type="domain" description="ABC transmembrane type-1" evidence="1">
    <location>
        <begin position="93"/>
        <end position="272"/>
    </location>
</feature>
<comment type="function">
    <text evidence="2 3 4 5">Part of the ABC transporter complex GbuABC involved in glycine betaine uptake. Responsible for the translocation of the substrate across the membrane. Involved, with BetL and OpuC, in osmoprotection and cryoprotection of Listeria. Can also uptake carnitine when carnitine is abundant in the growth medium.</text>
</comment>
<comment type="activity regulation">
    <text evidence="3">The complex is activated by an osmotic gradient or by low temperature.</text>
</comment>
<comment type="biophysicochemical properties">
    <kinetics>
        <KM evidence="3">2.9 uM for glycine betaine (in the presence of sucrose)</KM>
        <KM evidence="3">1.2 uM for glycine betaine (in the presence of KCl)</KM>
        <Vmax evidence="3">3730.0 pmol/min/mg enzyme (in the presence of sucrose)</Vmax>
        <Vmax evidence="3">2200.0 pmol/min/mg enzyme (in the presence of KCl)</Vmax>
    </kinetics>
</comment>
<comment type="subunit">
    <text evidence="7">The complex is composed of two ATP-binding proteins (GbuA), two transmembrane proteins (GbuB) and a solute-binding protein (GbuC).</text>
</comment>
<comment type="subcellular location">
    <subcellularLocation>
        <location evidence="6">Cell membrane</location>
        <topology evidence="1">Multi-pass membrane protein</topology>
    </subcellularLocation>
</comment>
<comment type="similarity">
    <text evidence="6">Belongs to the binding-protein-dependent transport system permease family.</text>
</comment>
<dbReference type="EMBL" id="AF039835">
    <property type="protein sequence ID" value="AAD29105.1"/>
    <property type="molecule type" value="Genomic_DNA"/>
</dbReference>
<dbReference type="EMBL" id="CP002002">
    <property type="protein sequence ID" value="AEO06015.1"/>
    <property type="molecule type" value="Genomic_DNA"/>
</dbReference>
<dbReference type="PIR" id="AG1201">
    <property type="entry name" value="AG1201"/>
</dbReference>
<dbReference type="RefSeq" id="WP_003722879.1">
    <property type="nucleotide sequence ID" value="NC_017544.1"/>
</dbReference>
<dbReference type="SMR" id="Q9RR45"/>
<dbReference type="KEGG" id="lmt:LMRG_02115"/>
<dbReference type="HOGENOM" id="CLU_028473_1_0_9"/>
<dbReference type="SABIO-RK" id="Q9RR45"/>
<dbReference type="Proteomes" id="UP000001288">
    <property type="component" value="Chromosome"/>
</dbReference>
<dbReference type="GO" id="GO:0043190">
    <property type="term" value="C:ATP-binding cassette (ABC) transporter complex"/>
    <property type="evidence" value="ECO:0007669"/>
    <property type="project" value="TreeGrafter"/>
</dbReference>
<dbReference type="GO" id="GO:0005275">
    <property type="term" value="F:amine transmembrane transporter activity"/>
    <property type="evidence" value="ECO:0007669"/>
    <property type="project" value="TreeGrafter"/>
</dbReference>
<dbReference type="GO" id="GO:0015199">
    <property type="term" value="F:amino-acid betaine transmembrane transporter activity"/>
    <property type="evidence" value="ECO:0000314"/>
    <property type="project" value="UniProtKB"/>
</dbReference>
<dbReference type="GO" id="GO:0015226">
    <property type="term" value="F:carnitine transmembrane transporter activity"/>
    <property type="evidence" value="ECO:0000314"/>
    <property type="project" value="UniProtKB"/>
</dbReference>
<dbReference type="GO" id="GO:0006865">
    <property type="term" value="P:amino acid transport"/>
    <property type="evidence" value="ECO:0007669"/>
    <property type="project" value="UniProtKB-KW"/>
</dbReference>
<dbReference type="GO" id="GO:0015879">
    <property type="term" value="P:carnitine transport"/>
    <property type="evidence" value="ECO:0000314"/>
    <property type="project" value="UniProtKB"/>
</dbReference>
<dbReference type="GO" id="GO:0015871">
    <property type="term" value="P:choline transport"/>
    <property type="evidence" value="ECO:0007669"/>
    <property type="project" value="TreeGrafter"/>
</dbReference>
<dbReference type="GO" id="GO:0031460">
    <property type="term" value="P:glycine betaine transport"/>
    <property type="evidence" value="ECO:0000314"/>
    <property type="project" value="UniProtKB"/>
</dbReference>
<dbReference type="GO" id="GO:0009409">
    <property type="term" value="P:response to cold"/>
    <property type="evidence" value="ECO:0000314"/>
    <property type="project" value="UniProtKB"/>
</dbReference>
<dbReference type="GO" id="GO:0006970">
    <property type="term" value="P:response to osmotic stress"/>
    <property type="evidence" value="ECO:0000314"/>
    <property type="project" value="UniProtKB"/>
</dbReference>
<dbReference type="CDD" id="cd06261">
    <property type="entry name" value="TM_PBP2"/>
    <property type="match status" value="1"/>
</dbReference>
<dbReference type="FunFam" id="1.10.3720.10:FF:000001">
    <property type="entry name" value="Glycine betaine ABC transporter, permease"/>
    <property type="match status" value="1"/>
</dbReference>
<dbReference type="Gene3D" id="1.10.3720.10">
    <property type="entry name" value="MetI-like"/>
    <property type="match status" value="1"/>
</dbReference>
<dbReference type="InterPro" id="IPR000515">
    <property type="entry name" value="MetI-like"/>
</dbReference>
<dbReference type="InterPro" id="IPR035906">
    <property type="entry name" value="MetI-like_sf"/>
</dbReference>
<dbReference type="PANTHER" id="PTHR47737">
    <property type="entry name" value="GLYCINE BETAINE/PROLINE BETAINE TRANSPORT SYSTEM PERMEASE PROTEIN PROW"/>
    <property type="match status" value="1"/>
</dbReference>
<dbReference type="PANTHER" id="PTHR47737:SF1">
    <property type="entry name" value="GLYCINE BETAINE_PROLINE BETAINE TRANSPORT SYSTEM PERMEASE PROTEIN PROW"/>
    <property type="match status" value="1"/>
</dbReference>
<dbReference type="Pfam" id="PF00528">
    <property type="entry name" value="BPD_transp_1"/>
    <property type="match status" value="1"/>
</dbReference>
<dbReference type="SUPFAM" id="SSF161098">
    <property type="entry name" value="MetI-like"/>
    <property type="match status" value="1"/>
</dbReference>
<dbReference type="PROSITE" id="PS50928">
    <property type="entry name" value="ABC_TM1"/>
    <property type="match status" value="1"/>
</dbReference>
<protein>
    <recommendedName>
        <fullName>Glycine betaine/carnitine transport permease protein GbuB</fullName>
    </recommendedName>
</protein>
<accession>Q9RR45</accession>
<accession>G2K537</accession>
<keyword id="KW-0029">Amino-acid transport</keyword>
<keyword id="KW-1003">Cell membrane</keyword>
<keyword id="KW-0472">Membrane</keyword>
<keyword id="KW-0346">Stress response</keyword>
<keyword id="KW-0812">Transmembrane</keyword>
<keyword id="KW-1133">Transmembrane helix</keyword>
<keyword id="KW-0813">Transport</keyword>
<proteinExistence type="evidence at protein level"/>
<name>GBUB_LISM4</name>
<evidence type="ECO:0000255" key="1">
    <source>
        <dbReference type="PROSITE-ProRule" id="PRU00441"/>
    </source>
</evidence>
<evidence type="ECO:0000269" key="2">
    <source>
    </source>
</evidence>
<evidence type="ECO:0000269" key="3">
    <source>
    </source>
</evidence>
<evidence type="ECO:0000269" key="4">
    <source>
    </source>
</evidence>
<evidence type="ECO:0000269" key="5">
    <source>
    </source>
</evidence>
<evidence type="ECO:0000305" key="6"/>
<evidence type="ECO:0000305" key="7">
    <source>
    </source>
</evidence>